<reference key="1">
    <citation type="journal article" date="1994" name="Virology">
        <title>Complete genomes, phylogenetic relatedness, and structural proteins of six strains of the hepatitis B virus, four of which represent two new genotypes.</title>
        <authorList>
            <person name="Norder H."/>
            <person name="Courouce A.M."/>
            <person name="Magnius L.O."/>
        </authorList>
    </citation>
    <scope>NUCLEOTIDE SEQUENCE [GENOMIC DNA]</scope>
</reference>
<reference key="2">
    <citation type="journal article" date="2007" name="World J. Gastroenterol.">
        <title>Hepatitis B virus replication.</title>
        <authorList>
            <person name="Beck J."/>
            <person name="Nassal M."/>
        </authorList>
    </citation>
    <scope>REVIEW</scope>
</reference>
<comment type="function">
    <text evidence="1">Multifunctional enzyme that converts the viral RNA genome into dsDNA in viral cytoplasmic capsids. This enzyme displays a DNA polymerase activity that can copy either DNA or RNA templates, and a ribonuclease H (RNase H) activity that cleaves the RNA strand of RNA-DNA heteroduplexes in a partially processive 3'- to 5'-endonucleasic mode. Neo-synthesized pregenomic RNA (pgRNA) are encapsidated together with the P protein, and reverse-transcribed inside the nucleocapsid. Initiation of reverse-transcription occurs first by binding the epsilon loop on the pgRNA genome, and is initiated by protein priming, thereby the 5'-end of (-)DNA is covalently linked to P protein. Partial (+)DNA is synthesized from the (-)DNA template and generates the relaxed circular DNA (RC-DNA) genome. After budding and infection, the RC-DNA migrates in the nucleus, and is converted into a plasmid-like covalently closed circular DNA (cccDNA). The activity of P protein does not seem to be necessary for cccDNA generation, and is presumably released from (+)DNA by host nuclear DNA repair machinery.</text>
</comment>
<comment type="catalytic activity">
    <reaction evidence="1">
        <text>DNA(n) + a 2'-deoxyribonucleoside 5'-triphosphate = DNA(n+1) + diphosphate</text>
        <dbReference type="Rhea" id="RHEA:22508"/>
        <dbReference type="Rhea" id="RHEA-COMP:17339"/>
        <dbReference type="Rhea" id="RHEA-COMP:17340"/>
        <dbReference type="ChEBI" id="CHEBI:33019"/>
        <dbReference type="ChEBI" id="CHEBI:61560"/>
        <dbReference type="ChEBI" id="CHEBI:173112"/>
        <dbReference type="EC" id="2.7.7.7"/>
    </reaction>
</comment>
<comment type="catalytic activity">
    <reaction evidence="1">
        <text>DNA(n) + a 2'-deoxyribonucleoside 5'-triphosphate = DNA(n+1) + diphosphate</text>
        <dbReference type="Rhea" id="RHEA:22508"/>
        <dbReference type="Rhea" id="RHEA-COMP:17339"/>
        <dbReference type="Rhea" id="RHEA-COMP:17340"/>
        <dbReference type="ChEBI" id="CHEBI:33019"/>
        <dbReference type="ChEBI" id="CHEBI:61560"/>
        <dbReference type="ChEBI" id="CHEBI:173112"/>
        <dbReference type="EC" id="2.7.7.49"/>
    </reaction>
</comment>
<comment type="catalytic activity">
    <reaction evidence="1">
        <text>Endonucleolytic cleavage to 5'-phosphomonoester.</text>
        <dbReference type="EC" id="3.1.26.4"/>
    </reaction>
</comment>
<comment type="activity regulation">
    <text evidence="1">Activated by host HSP70 and HSP40 in vitro to be able to bind the epsilon loop of the pgRNA. Because deletion of the RNase H region renders the protein partly chaperone-independent, the chaperones may be needed indirectly to relieve occlusion of the RNA-binding site by this domain. Inhibited by several reverse-transcriptase inhibitors: Lamivudine, Adefovir and Entecavir.</text>
</comment>
<comment type="domain">
    <text evidence="1">Terminal protein domain (TP) is hepadnavirus-specific. Spacer domain is highly variable and separates the TP and RT domains. Polymerase/reverse-transcriptase domain (RT) and ribonuclease H domain (RH) are similar to retrovirus reverse transcriptase/RNase H.</text>
</comment>
<comment type="domain">
    <text evidence="1">The polymerase/reverse transcriptase (RT) and ribonuclease H (RH) domains are structured in five subdomains: finger, palm, thumb, connection and RNase H. Within the palm subdomain, the 'primer grip' region is thought to be involved in the positioning of the primer terminus for accommodating the incoming nucleotide. The RH domain stabilizes the association of RT with primer-template.</text>
</comment>
<comment type="miscellaneous">
    <text evidence="1">Hepadnaviral virions contain probably just one P protein molecule per particle.</text>
</comment>
<comment type="similarity">
    <text evidence="1">Belongs to the hepadnaviridae P protein family.</text>
</comment>
<organism>
    <name type="scientific">Hepatitis B virus genotype F2 subtype adw4q (isolate Senegal/9203)</name>
    <name type="common">HBV-F</name>
    <dbReference type="NCBI Taxonomy" id="489503"/>
    <lineage>
        <taxon>Viruses</taxon>
        <taxon>Riboviria</taxon>
        <taxon>Pararnavirae</taxon>
        <taxon>Artverviricota</taxon>
        <taxon>Revtraviricetes</taxon>
        <taxon>Blubervirales</taxon>
        <taxon>Hepadnaviridae</taxon>
        <taxon>Orthohepadnavirus</taxon>
        <taxon>Hepatitis B virus</taxon>
        <taxon>hepatitis B virus genotype F</taxon>
    </lineage>
</organism>
<dbReference type="EC" id="2.7.7.7" evidence="1"/>
<dbReference type="EC" id="2.7.7.49" evidence="1"/>
<dbReference type="EC" id="3.1.26.4" evidence="1"/>
<dbReference type="EMBL" id="X75663">
    <property type="protein sequence ID" value="CAA53350.1"/>
    <property type="molecule type" value="Genomic_DNA"/>
</dbReference>
<dbReference type="Proteomes" id="UP000007406">
    <property type="component" value="Genome"/>
</dbReference>
<dbReference type="GO" id="GO:0003677">
    <property type="term" value="F:DNA binding"/>
    <property type="evidence" value="ECO:0007669"/>
    <property type="project" value="UniProtKB-UniRule"/>
</dbReference>
<dbReference type="GO" id="GO:0003887">
    <property type="term" value="F:DNA-directed DNA polymerase activity"/>
    <property type="evidence" value="ECO:0007669"/>
    <property type="project" value="UniProtKB-UniRule"/>
</dbReference>
<dbReference type="GO" id="GO:0046872">
    <property type="term" value="F:metal ion binding"/>
    <property type="evidence" value="ECO:0007669"/>
    <property type="project" value="UniProtKB-UniRule"/>
</dbReference>
<dbReference type="GO" id="GO:0003964">
    <property type="term" value="F:RNA-directed DNA polymerase activity"/>
    <property type="evidence" value="ECO:0007669"/>
    <property type="project" value="UniProtKB-UniRule"/>
</dbReference>
<dbReference type="GO" id="GO:0004523">
    <property type="term" value="F:RNA-DNA hybrid ribonuclease activity"/>
    <property type="evidence" value="ECO:0007669"/>
    <property type="project" value="UniProtKB-UniRule"/>
</dbReference>
<dbReference type="GO" id="GO:0006260">
    <property type="term" value="P:DNA replication"/>
    <property type="evidence" value="ECO:0007669"/>
    <property type="project" value="UniProtKB-UniRule"/>
</dbReference>
<dbReference type="GO" id="GO:0052170">
    <property type="term" value="P:symbiont-mediated suppression of host innate immune response"/>
    <property type="evidence" value="ECO:0007669"/>
    <property type="project" value="UniProtKB-UniRule"/>
</dbReference>
<dbReference type="FunFam" id="3.30.70.270:FF:000009">
    <property type="entry name" value="Protein P"/>
    <property type="match status" value="1"/>
</dbReference>
<dbReference type="Gene3D" id="3.30.70.270">
    <property type="match status" value="1"/>
</dbReference>
<dbReference type="HAMAP" id="MF_04073">
    <property type="entry name" value="HBV_DPOL"/>
    <property type="match status" value="1"/>
</dbReference>
<dbReference type="InterPro" id="IPR043502">
    <property type="entry name" value="DNA/RNA_pol_sf"/>
</dbReference>
<dbReference type="InterPro" id="IPR001462">
    <property type="entry name" value="DNApol_viral_C"/>
</dbReference>
<dbReference type="InterPro" id="IPR000201">
    <property type="entry name" value="DNApol_viral_N"/>
</dbReference>
<dbReference type="InterPro" id="IPR037531">
    <property type="entry name" value="HBV_DPOL"/>
</dbReference>
<dbReference type="InterPro" id="IPR043128">
    <property type="entry name" value="Rev_trsase/Diguanyl_cyclase"/>
</dbReference>
<dbReference type="InterPro" id="IPR000477">
    <property type="entry name" value="RT_dom"/>
</dbReference>
<dbReference type="InterPro" id="IPR051320">
    <property type="entry name" value="Viral_Replic_Matur_Polypro"/>
</dbReference>
<dbReference type="PANTHER" id="PTHR33064:SF29">
    <property type="entry name" value="PEPTIDASE A2 DOMAIN-CONTAINING PROTEIN-RELATED"/>
    <property type="match status" value="1"/>
</dbReference>
<dbReference type="PANTHER" id="PTHR33064">
    <property type="entry name" value="POL PROTEIN"/>
    <property type="match status" value="1"/>
</dbReference>
<dbReference type="Pfam" id="PF00336">
    <property type="entry name" value="DNA_pol_viral_C"/>
    <property type="match status" value="1"/>
</dbReference>
<dbReference type="Pfam" id="PF00242">
    <property type="entry name" value="DNA_pol_viral_N"/>
    <property type="match status" value="1"/>
</dbReference>
<dbReference type="Pfam" id="PF00078">
    <property type="entry name" value="RVT_1"/>
    <property type="match status" value="1"/>
</dbReference>
<dbReference type="SUPFAM" id="SSF56672">
    <property type="entry name" value="DNA/RNA polymerases"/>
    <property type="match status" value="1"/>
</dbReference>
<dbReference type="PROSITE" id="PS50878">
    <property type="entry name" value="RT_POL"/>
    <property type="match status" value="1"/>
</dbReference>
<evidence type="ECO:0000255" key="1">
    <source>
        <dbReference type="HAMAP-Rule" id="MF_04073"/>
    </source>
</evidence>
<evidence type="ECO:0000256" key="2">
    <source>
        <dbReference type="SAM" id="MobiDB-lite"/>
    </source>
</evidence>
<accession>Q69605</accession>
<organismHost>
    <name type="scientific">Homo sapiens</name>
    <name type="common">Human</name>
    <dbReference type="NCBI Taxonomy" id="9606"/>
</organismHost>
<organismHost>
    <name type="scientific">Pan troglodytes</name>
    <name type="common">Chimpanzee</name>
    <dbReference type="NCBI Taxonomy" id="9598"/>
</organismHost>
<name>DPOL_HBVF6</name>
<feature type="chain" id="PRO_0000323277" description="Protein P">
    <location>
        <begin position="1"/>
        <end position="843"/>
    </location>
</feature>
<feature type="domain" description="Reverse transcriptase" evidence="1">
    <location>
        <begin position="357"/>
        <end position="600"/>
    </location>
</feature>
<feature type="region of interest" description="Terminal protein domain (TP)" evidence="1">
    <location>
        <begin position="1"/>
        <end position="177"/>
    </location>
</feature>
<feature type="region of interest" description="Spacer" evidence="1">
    <location>
        <begin position="178"/>
        <end position="346"/>
    </location>
</feature>
<feature type="region of interest" description="Disordered" evidence="2">
    <location>
        <begin position="228"/>
        <end position="255"/>
    </location>
</feature>
<feature type="region of interest" description="Disordered" evidence="2">
    <location>
        <begin position="284"/>
        <end position="314"/>
    </location>
</feature>
<feature type="region of interest" description="Polymerase/reverse transcriptase domain (RT)" evidence="1">
    <location>
        <begin position="347"/>
        <end position="690"/>
    </location>
</feature>
<feature type="compositionally biased region" description="Basic residues" evidence="2">
    <location>
        <begin position="239"/>
        <end position="249"/>
    </location>
</feature>
<feature type="binding site" evidence="1">
    <location>
        <position position="429"/>
    </location>
    <ligand>
        <name>Mg(2+)</name>
        <dbReference type="ChEBI" id="CHEBI:18420"/>
        <note>catalytic</note>
    </ligand>
</feature>
<feature type="binding site" evidence="1">
    <location>
        <position position="551"/>
    </location>
    <ligand>
        <name>Mg(2+)</name>
        <dbReference type="ChEBI" id="CHEBI:18420"/>
        <note>catalytic</note>
    </ligand>
</feature>
<feature type="binding site" evidence="1">
    <location>
        <position position="552"/>
    </location>
    <ligand>
        <name>Mg(2+)</name>
        <dbReference type="ChEBI" id="CHEBI:18420"/>
        <note>catalytic</note>
    </ligand>
</feature>
<feature type="site" description="Priming of reverse-transcription by covalently linking the first nucleotide of the (-)DNA" evidence="1">
    <location>
        <position position="63"/>
    </location>
</feature>
<protein>
    <recommendedName>
        <fullName evidence="1">Protein P</fullName>
    </recommendedName>
    <domain>
        <recommendedName>
            <fullName evidence="1">DNA-directed DNA polymerase</fullName>
            <ecNumber evidence="1">2.7.7.7</ecNumber>
        </recommendedName>
    </domain>
    <domain>
        <recommendedName>
            <fullName evidence="1">RNA-directed DNA polymerase</fullName>
            <ecNumber evidence="1">2.7.7.49</ecNumber>
        </recommendedName>
    </domain>
    <domain>
        <recommendedName>
            <fullName evidence="1">Ribonuclease H</fullName>
            <ecNumber evidence="1">3.1.26.4</ecNumber>
        </recommendedName>
    </domain>
</protein>
<sequence>MPLSYPHFRKLLLLDDEAGPLEEELPRLADEGLNRRVAEDLNLQLPNVSIPWTHKVGNFTGLYSSTVPAFNPNWLTPSFPDIHLHQDMISKCEQFVGPLTKNELRRLKLVMPARFYPKHTKYFLLEKGIKPYYPDQAVNHYFQTRHYLHTLWKAGILYKRETTRSASFCGSQYSWEQELQHGSTSLNDKKGHGTESFCAQSTGLLARPSAGSAIQSKFQQSRLGLQHKQGQLANGKQGRSGRLRSRVHTPTRWPAGVEPSGTGCFNNLASRSASCFHQSAVREEANPSLSTSKRHTSSGHAVELNSLPPSSVGSQGKGTVFSCWWLQFRNTEPCSDYCLSHIINLLEDWGPCYEHGEHHIRTPRTPARVTGGVFLVDKNPHNTTESRLVVDFSQFSRGTTQVSWPKFAVPNLQSLTNLLSSNLSWLSLDVSAAFYHLPLHPAAMPHLLVGSSGLPRYVARLSSTSRIHDHQHGTMQNLHSSCSRNLYVSLLLLFQTLGRKLHLYSHPIILGFRKIPMGVGLSPFLLAQFTSAICSVVRRAFPHCLAFSYMDDLVLGAKSVQHLESLYTAVTNFLLSVGIHLNTAKTKRWGYNLHFMGYVIGSWGTLPQDHIVHKIKDCFRKVPVNRPIDWKVCQSIVGLLGFAAPFTQCGYPALMPLYACITAKQAFVFSPTYKAFLCKQYMNLYPVARQRPGLCQVFADATPTGWGLAIGHQRMRGTFVAPLPIHTAELLAACFARSRSGAILIGTDNSVVLSRKYTSFPWLLGCAANWILRGTSFVYVPSALNPADEPSRGRLGLYRPLLRLPFQPTTGRTSLYADSPSVPSHLPDRVHFASPLHVAWRPP</sequence>
<proteinExistence type="inferred from homology"/>
<gene>
    <name evidence="1" type="primary">P</name>
</gene>
<keyword id="KW-0235">DNA replication</keyword>
<keyword id="KW-0238">DNA-binding</keyword>
<keyword id="KW-0239">DNA-directed DNA polymerase</keyword>
<keyword id="KW-0255">Endonuclease</keyword>
<keyword id="KW-0945">Host-virus interaction</keyword>
<keyword id="KW-0378">Hydrolase</keyword>
<keyword id="KW-1090">Inhibition of host innate immune response by virus</keyword>
<keyword id="KW-1113">Inhibition of host RLR pathway by virus</keyword>
<keyword id="KW-0460">Magnesium</keyword>
<keyword id="KW-0479">Metal-binding</keyword>
<keyword id="KW-0511">Multifunctional enzyme</keyword>
<keyword id="KW-0540">Nuclease</keyword>
<keyword id="KW-0548">Nucleotidyltransferase</keyword>
<keyword id="KW-0695">RNA-directed DNA polymerase</keyword>
<keyword id="KW-0808">Transferase</keyword>
<keyword id="KW-0899">Viral immunoevasion</keyword>